<reference key="1">
    <citation type="journal article" date="2005" name="Nat. Genet.">
        <title>The complete genome sequence of Francisella tularensis, the causative agent of tularemia.</title>
        <authorList>
            <person name="Larsson P."/>
            <person name="Oyston P.C.F."/>
            <person name="Chain P."/>
            <person name="Chu M.C."/>
            <person name="Duffield M."/>
            <person name="Fuxelius H.-H."/>
            <person name="Garcia E."/>
            <person name="Haelltorp G."/>
            <person name="Johansson D."/>
            <person name="Isherwood K.E."/>
            <person name="Karp P.D."/>
            <person name="Larsson E."/>
            <person name="Liu Y."/>
            <person name="Michell S."/>
            <person name="Prior J."/>
            <person name="Prior R."/>
            <person name="Malfatti S."/>
            <person name="Sjoestedt A."/>
            <person name="Svensson K."/>
            <person name="Thompson N."/>
            <person name="Vergez L."/>
            <person name="Wagg J.K."/>
            <person name="Wren B.W."/>
            <person name="Lindler L.E."/>
            <person name="Andersson S.G.E."/>
            <person name="Forsman M."/>
            <person name="Titball R.W."/>
        </authorList>
    </citation>
    <scope>NUCLEOTIDE SEQUENCE [LARGE SCALE GENOMIC DNA]</scope>
    <source>
        <strain>SCHU S4 / Schu 4</strain>
    </source>
</reference>
<organism>
    <name type="scientific">Francisella tularensis subsp. tularensis (strain SCHU S4 / Schu 4)</name>
    <dbReference type="NCBI Taxonomy" id="177416"/>
    <lineage>
        <taxon>Bacteria</taxon>
        <taxon>Pseudomonadati</taxon>
        <taxon>Pseudomonadota</taxon>
        <taxon>Gammaproteobacteria</taxon>
        <taxon>Thiotrichales</taxon>
        <taxon>Francisellaceae</taxon>
        <taxon>Francisella</taxon>
    </lineage>
</organism>
<dbReference type="EC" id="3.1.15.-" evidence="1"/>
<dbReference type="EMBL" id="AJ749949">
    <property type="protein sequence ID" value="CAG44861.1"/>
    <property type="molecule type" value="Genomic_DNA"/>
</dbReference>
<dbReference type="RefSeq" id="WP_003021796.1">
    <property type="nucleotide sequence ID" value="NC_006570.2"/>
</dbReference>
<dbReference type="RefSeq" id="YP_169281.1">
    <property type="nucleotide sequence ID" value="NC_006570.2"/>
</dbReference>
<dbReference type="SMR" id="Q5NI61"/>
<dbReference type="STRING" id="177416.FTT_0228c"/>
<dbReference type="DNASU" id="3191187"/>
<dbReference type="EnsemblBacteria" id="CAG44861">
    <property type="protein sequence ID" value="CAG44861"/>
    <property type="gene ID" value="FTT_0228c"/>
</dbReference>
<dbReference type="KEGG" id="ftu:FTT_0228c"/>
<dbReference type="eggNOG" id="COG1949">
    <property type="taxonomic scope" value="Bacteria"/>
</dbReference>
<dbReference type="OrthoDB" id="9801329at2"/>
<dbReference type="Proteomes" id="UP000001174">
    <property type="component" value="Chromosome"/>
</dbReference>
<dbReference type="GO" id="GO:0005737">
    <property type="term" value="C:cytoplasm"/>
    <property type="evidence" value="ECO:0007669"/>
    <property type="project" value="UniProtKB-SubCell"/>
</dbReference>
<dbReference type="GO" id="GO:0000175">
    <property type="term" value="F:3'-5'-RNA exonuclease activity"/>
    <property type="evidence" value="ECO:0007669"/>
    <property type="project" value="InterPro"/>
</dbReference>
<dbReference type="GO" id="GO:0003676">
    <property type="term" value="F:nucleic acid binding"/>
    <property type="evidence" value="ECO:0007669"/>
    <property type="project" value="InterPro"/>
</dbReference>
<dbReference type="GO" id="GO:0006259">
    <property type="term" value="P:DNA metabolic process"/>
    <property type="evidence" value="ECO:0007669"/>
    <property type="project" value="UniProtKB-ARBA"/>
</dbReference>
<dbReference type="CDD" id="cd06135">
    <property type="entry name" value="Orn"/>
    <property type="match status" value="1"/>
</dbReference>
<dbReference type="FunFam" id="3.30.420.10:FF:000003">
    <property type="entry name" value="Oligoribonuclease"/>
    <property type="match status" value="1"/>
</dbReference>
<dbReference type="Gene3D" id="3.30.420.10">
    <property type="entry name" value="Ribonuclease H-like superfamily/Ribonuclease H"/>
    <property type="match status" value="1"/>
</dbReference>
<dbReference type="HAMAP" id="MF_00045">
    <property type="entry name" value="Oligoribonuclease"/>
    <property type="match status" value="1"/>
</dbReference>
<dbReference type="InterPro" id="IPR013520">
    <property type="entry name" value="Exonuclease_RNaseT/DNA_pol3"/>
</dbReference>
<dbReference type="InterPro" id="IPR022894">
    <property type="entry name" value="Oligoribonuclease"/>
</dbReference>
<dbReference type="InterPro" id="IPR012337">
    <property type="entry name" value="RNaseH-like_sf"/>
</dbReference>
<dbReference type="InterPro" id="IPR036397">
    <property type="entry name" value="RNaseH_sf"/>
</dbReference>
<dbReference type="NCBIfam" id="NF003765">
    <property type="entry name" value="PRK05359.1"/>
    <property type="match status" value="1"/>
</dbReference>
<dbReference type="PANTHER" id="PTHR11046">
    <property type="entry name" value="OLIGORIBONUCLEASE, MITOCHONDRIAL"/>
    <property type="match status" value="1"/>
</dbReference>
<dbReference type="PANTHER" id="PTHR11046:SF0">
    <property type="entry name" value="OLIGORIBONUCLEASE, MITOCHONDRIAL"/>
    <property type="match status" value="1"/>
</dbReference>
<dbReference type="Pfam" id="PF00929">
    <property type="entry name" value="RNase_T"/>
    <property type="match status" value="1"/>
</dbReference>
<dbReference type="SMART" id="SM00479">
    <property type="entry name" value="EXOIII"/>
    <property type="match status" value="1"/>
</dbReference>
<dbReference type="SUPFAM" id="SSF53098">
    <property type="entry name" value="Ribonuclease H-like"/>
    <property type="match status" value="1"/>
</dbReference>
<name>ORN_FRATT</name>
<protein>
    <recommendedName>
        <fullName evidence="1">Oligoribonuclease</fullName>
        <ecNumber evidence="1">3.1.15.-</ecNumber>
    </recommendedName>
</protein>
<gene>
    <name evidence="1" type="primary">orn</name>
    <name type="ordered locus">FTT_0228c</name>
</gene>
<keyword id="KW-0963">Cytoplasm</keyword>
<keyword id="KW-0269">Exonuclease</keyword>
<keyword id="KW-0378">Hydrolase</keyword>
<keyword id="KW-0540">Nuclease</keyword>
<keyword id="KW-1185">Reference proteome</keyword>
<accession>Q5NI61</accession>
<evidence type="ECO:0000255" key="1">
    <source>
        <dbReference type="HAMAP-Rule" id="MF_00045"/>
    </source>
</evidence>
<comment type="function">
    <text evidence="1">3'-to-5' exoribonuclease specific for small oligoribonucleotides.</text>
</comment>
<comment type="subcellular location">
    <subcellularLocation>
        <location evidence="1">Cytoplasm</location>
    </subcellularLocation>
</comment>
<comment type="similarity">
    <text evidence="1">Belongs to the oligoribonuclease family.</text>
</comment>
<feature type="chain" id="PRO_0000111037" description="Oligoribonuclease">
    <location>
        <begin position="1"/>
        <end position="178"/>
    </location>
</feature>
<feature type="domain" description="Exonuclease" evidence="1">
    <location>
        <begin position="7"/>
        <end position="168"/>
    </location>
</feature>
<feature type="active site" evidence="1">
    <location>
        <position position="128"/>
    </location>
</feature>
<sequence length="178" mass="20670">MQSADNLIWIDLEMTGLDVDSCKITEIAAIITDKDLNIIAEAEPIAIYQPDEVLANMNEWCIKTHTETGLTQRVKDSKISTEAAEQQILEFIRKFVPYQSSPLCGNSIWQDRRFLAKYMPNIDEYCHYRMLDVTTLKLLNQYWGDGKSFEKKNTHKALDDIRESIAELKFYRQKLLSI</sequence>
<proteinExistence type="inferred from homology"/>